<evidence type="ECO:0000255" key="1">
    <source>
        <dbReference type="HAMAP-Rule" id="MF_00736"/>
    </source>
</evidence>
<evidence type="ECO:0000305" key="2"/>
<comment type="function">
    <text evidence="1">Forms part of the ribosomal stalk which helps the ribosome interact with GTP-bound translation factors.</text>
</comment>
<comment type="subunit">
    <text evidence="1">Part of the ribosomal stalk of the 50S ribosomal subunit. Interacts with L10 and the large rRNA to form the base of the stalk. L10 forms an elongated spine to which L12 dimers bind in a sequential fashion forming a multimeric L10(L12)X complex.</text>
</comment>
<comment type="PTM">
    <text evidence="1">One or more lysine residues are methylated.</text>
</comment>
<comment type="similarity">
    <text evidence="1">Belongs to the universal ribosomal protein uL11 family.</text>
</comment>
<name>RL11_STRZJ</name>
<dbReference type="EMBL" id="CP000919">
    <property type="protein sequence ID" value="ACO19434.1"/>
    <property type="molecule type" value="Genomic_DNA"/>
</dbReference>
<dbReference type="RefSeq" id="WP_001085809.1">
    <property type="nucleotide sequence ID" value="NC_012466.1"/>
</dbReference>
<dbReference type="SMR" id="C1CD02"/>
<dbReference type="GeneID" id="93739230"/>
<dbReference type="KEGG" id="sjj:SPJ_0582"/>
<dbReference type="HOGENOM" id="CLU_074237_2_1_9"/>
<dbReference type="Proteomes" id="UP000002206">
    <property type="component" value="Chromosome"/>
</dbReference>
<dbReference type="GO" id="GO:0022625">
    <property type="term" value="C:cytosolic large ribosomal subunit"/>
    <property type="evidence" value="ECO:0007669"/>
    <property type="project" value="TreeGrafter"/>
</dbReference>
<dbReference type="GO" id="GO:0070180">
    <property type="term" value="F:large ribosomal subunit rRNA binding"/>
    <property type="evidence" value="ECO:0007669"/>
    <property type="project" value="UniProtKB-UniRule"/>
</dbReference>
<dbReference type="GO" id="GO:0003735">
    <property type="term" value="F:structural constituent of ribosome"/>
    <property type="evidence" value="ECO:0007669"/>
    <property type="project" value="InterPro"/>
</dbReference>
<dbReference type="GO" id="GO:0006412">
    <property type="term" value="P:translation"/>
    <property type="evidence" value="ECO:0007669"/>
    <property type="project" value="UniProtKB-UniRule"/>
</dbReference>
<dbReference type="CDD" id="cd00349">
    <property type="entry name" value="Ribosomal_L11"/>
    <property type="match status" value="1"/>
</dbReference>
<dbReference type="FunFam" id="1.10.10.250:FF:000001">
    <property type="entry name" value="50S ribosomal protein L11"/>
    <property type="match status" value="1"/>
</dbReference>
<dbReference type="FunFam" id="3.30.1550.10:FF:000001">
    <property type="entry name" value="50S ribosomal protein L11"/>
    <property type="match status" value="1"/>
</dbReference>
<dbReference type="Gene3D" id="1.10.10.250">
    <property type="entry name" value="Ribosomal protein L11, C-terminal domain"/>
    <property type="match status" value="1"/>
</dbReference>
<dbReference type="Gene3D" id="3.30.1550.10">
    <property type="entry name" value="Ribosomal protein L11/L12, N-terminal domain"/>
    <property type="match status" value="1"/>
</dbReference>
<dbReference type="HAMAP" id="MF_00736">
    <property type="entry name" value="Ribosomal_uL11"/>
    <property type="match status" value="1"/>
</dbReference>
<dbReference type="InterPro" id="IPR000911">
    <property type="entry name" value="Ribosomal_uL11"/>
</dbReference>
<dbReference type="InterPro" id="IPR006519">
    <property type="entry name" value="Ribosomal_uL11_bac-typ"/>
</dbReference>
<dbReference type="InterPro" id="IPR020783">
    <property type="entry name" value="Ribosomal_uL11_C"/>
</dbReference>
<dbReference type="InterPro" id="IPR036769">
    <property type="entry name" value="Ribosomal_uL11_C_sf"/>
</dbReference>
<dbReference type="InterPro" id="IPR020785">
    <property type="entry name" value="Ribosomal_uL11_CS"/>
</dbReference>
<dbReference type="InterPro" id="IPR020784">
    <property type="entry name" value="Ribosomal_uL11_N"/>
</dbReference>
<dbReference type="InterPro" id="IPR036796">
    <property type="entry name" value="Ribosomal_uL11_N_sf"/>
</dbReference>
<dbReference type="NCBIfam" id="TIGR01632">
    <property type="entry name" value="L11_bact"/>
    <property type="match status" value="1"/>
</dbReference>
<dbReference type="PANTHER" id="PTHR11661">
    <property type="entry name" value="60S RIBOSOMAL PROTEIN L12"/>
    <property type="match status" value="1"/>
</dbReference>
<dbReference type="PANTHER" id="PTHR11661:SF1">
    <property type="entry name" value="LARGE RIBOSOMAL SUBUNIT PROTEIN UL11M"/>
    <property type="match status" value="1"/>
</dbReference>
<dbReference type="Pfam" id="PF00298">
    <property type="entry name" value="Ribosomal_L11"/>
    <property type="match status" value="1"/>
</dbReference>
<dbReference type="Pfam" id="PF03946">
    <property type="entry name" value="Ribosomal_L11_N"/>
    <property type="match status" value="1"/>
</dbReference>
<dbReference type="SMART" id="SM00649">
    <property type="entry name" value="RL11"/>
    <property type="match status" value="1"/>
</dbReference>
<dbReference type="SUPFAM" id="SSF54747">
    <property type="entry name" value="Ribosomal L11/L12e N-terminal domain"/>
    <property type="match status" value="1"/>
</dbReference>
<dbReference type="SUPFAM" id="SSF46906">
    <property type="entry name" value="Ribosomal protein L11, C-terminal domain"/>
    <property type="match status" value="1"/>
</dbReference>
<dbReference type="PROSITE" id="PS00359">
    <property type="entry name" value="RIBOSOMAL_L11"/>
    <property type="match status" value="1"/>
</dbReference>
<proteinExistence type="inferred from homology"/>
<gene>
    <name evidence="1" type="primary">rplK</name>
    <name type="ordered locus">SPJ_0582</name>
</gene>
<keyword id="KW-0488">Methylation</keyword>
<keyword id="KW-0687">Ribonucleoprotein</keyword>
<keyword id="KW-0689">Ribosomal protein</keyword>
<keyword id="KW-0694">RNA-binding</keyword>
<keyword id="KW-0699">rRNA-binding</keyword>
<feature type="chain" id="PRO_1000195726" description="Large ribosomal subunit protein uL11">
    <location>
        <begin position="1"/>
        <end position="141"/>
    </location>
</feature>
<organism>
    <name type="scientific">Streptococcus pneumoniae (strain JJA)</name>
    <dbReference type="NCBI Taxonomy" id="488222"/>
    <lineage>
        <taxon>Bacteria</taxon>
        <taxon>Bacillati</taxon>
        <taxon>Bacillota</taxon>
        <taxon>Bacilli</taxon>
        <taxon>Lactobacillales</taxon>
        <taxon>Streptococcaceae</taxon>
        <taxon>Streptococcus</taxon>
    </lineage>
</organism>
<sequence length="141" mass="14800">MAKKVEKLVKLQIPAGKATPAPPVGPALGQAGINIMGFTKEFNARTADQAGMIIPVVISVYEDKSFTFVTKTPPAAVLLKKAAGVEKGSGTPNKTKVATVTRAQVQEIAETKMPDLNAANVESAMRMIEGTARSMGFTVVD</sequence>
<accession>C1CD02</accession>
<reference key="1">
    <citation type="journal article" date="2010" name="Genome Biol.">
        <title>Structure and dynamics of the pan-genome of Streptococcus pneumoniae and closely related species.</title>
        <authorList>
            <person name="Donati C."/>
            <person name="Hiller N.L."/>
            <person name="Tettelin H."/>
            <person name="Muzzi A."/>
            <person name="Croucher N.J."/>
            <person name="Angiuoli S.V."/>
            <person name="Oggioni M."/>
            <person name="Dunning Hotopp J.C."/>
            <person name="Hu F.Z."/>
            <person name="Riley D.R."/>
            <person name="Covacci A."/>
            <person name="Mitchell T.J."/>
            <person name="Bentley S.D."/>
            <person name="Kilian M."/>
            <person name="Ehrlich G.D."/>
            <person name="Rappuoli R."/>
            <person name="Moxon E.R."/>
            <person name="Masignani V."/>
        </authorList>
    </citation>
    <scope>NUCLEOTIDE SEQUENCE [LARGE SCALE GENOMIC DNA]</scope>
    <source>
        <strain>JJA</strain>
    </source>
</reference>
<protein>
    <recommendedName>
        <fullName evidence="1">Large ribosomal subunit protein uL11</fullName>
    </recommendedName>
    <alternativeName>
        <fullName evidence="2">50S ribosomal protein L11</fullName>
    </alternativeName>
</protein>